<gene>
    <name evidence="1" type="primary">ruvA</name>
    <name type="ordered locus">Daro_4062</name>
</gene>
<sequence>MIGRLTGILAEKNPPQIVLDVNGVGYELDVPMSTFYNLPAAGEKTKLLTHFAVREDGHYLYGFLTEAERFAFRQLLKVSGIGARTALSVLSGLSVGDLAAAVAQQELGRLIKIPGIGKKTAERLLLELKGKLADATGVSLHPAVDDSKQDISNALLALGYNEKEAASAMKQLPADVSTSDGIRAALKLLSKV</sequence>
<evidence type="ECO:0000255" key="1">
    <source>
        <dbReference type="HAMAP-Rule" id="MF_00031"/>
    </source>
</evidence>
<reference key="1">
    <citation type="journal article" date="2009" name="BMC Genomics">
        <title>Metabolic analysis of the soil microbe Dechloromonas aromatica str. RCB: indications of a surprisingly complex life-style and cryptic anaerobic pathways for aromatic degradation.</title>
        <authorList>
            <person name="Salinero K.K."/>
            <person name="Keller K."/>
            <person name="Feil W.S."/>
            <person name="Feil H."/>
            <person name="Trong S."/>
            <person name="Di Bartolo G."/>
            <person name="Lapidus A."/>
        </authorList>
    </citation>
    <scope>NUCLEOTIDE SEQUENCE [LARGE SCALE GENOMIC DNA]</scope>
    <source>
        <strain>RCB</strain>
    </source>
</reference>
<organism>
    <name type="scientific">Dechloromonas aromatica (strain RCB)</name>
    <dbReference type="NCBI Taxonomy" id="159087"/>
    <lineage>
        <taxon>Bacteria</taxon>
        <taxon>Pseudomonadati</taxon>
        <taxon>Pseudomonadota</taxon>
        <taxon>Betaproteobacteria</taxon>
        <taxon>Rhodocyclales</taxon>
        <taxon>Azonexaceae</taxon>
        <taxon>Dechloromonas</taxon>
    </lineage>
</organism>
<protein>
    <recommendedName>
        <fullName evidence="1">Holliday junction branch migration complex subunit RuvA</fullName>
    </recommendedName>
</protein>
<keyword id="KW-0963">Cytoplasm</keyword>
<keyword id="KW-0227">DNA damage</keyword>
<keyword id="KW-0233">DNA recombination</keyword>
<keyword id="KW-0234">DNA repair</keyword>
<keyword id="KW-0238">DNA-binding</keyword>
<comment type="function">
    <text evidence="1">The RuvA-RuvB-RuvC complex processes Holliday junction (HJ) DNA during genetic recombination and DNA repair, while the RuvA-RuvB complex plays an important role in the rescue of blocked DNA replication forks via replication fork reversal (RFR). RuvA specifically binds to HJ cruciform DNA, conferring on it an open structure. The RuvB hexamer acts as an ATP-dependent pump, pulling dsDNA into and through the RuvAB complex. HJ branch migration allows RuvC to scan DNA until it finds its consensus sequence, where it cleaves and resolves the cruciform DNA.</text>
</comment>
<comment type="subunit">
    <text evidence="1">Homotetramer. Forms an RuvA(8)-RuvB(12)-Holliday junction (HJ) complex. HJ DNA is sandwiched between 2 RuvA tetramers; dsDNA enters through RuvA and exits via RuvB. An RuvB hexamer assembles on each DNA strand where it exits the tetramer. Each RuvB hexamer is contacted by two RuvA subunits (via domain III) on 2 adjacent RuvB subunits; this complex drives branch migration. In the full resolvosome a probable DNA-RuvA(4)-RuvB(12)-RuvC(2) complex forms which resolves the HJ.</text>
</comment>
<comment type="subcellular location">
    <subcellularLocation>
        <location evidence="1">Cytoplasm</location>
    </subcellularLocation>
</comment>
<comment type="domain">
    <text evidence="1">Has three domains with a flexible linker between the domains II and III and assumes an 'L' shape. Domain III is highly mobile and contacts RuvB.</text>
</comment>
<comment type="similarity">
    <text evidence="1">Belongs to the RuvA family.</text>
</comment>
<name>RUVA_DECAR</name>
<dbReference type="EMBL" id="CP000089">
    <property type="protein sequence ID" value="AAZ48788.1"/>
    <property type="molecule type" value="Genomic_DNA"/>
</dbReference>
<dbReference type="SMR" id="Q478E3"/>
<dbReference type="STRING" id="159087.Daro_4062"/>
<dbReference type="KEGG" id="dar:Daro_4062"/>
<dbReference type="eggNOG" id="COG0632">
    <property type="taxonomic scope" value="Bacteria"/>
</dbReference>
<dbReference type="HOGENOM" id="CLU_087936_0_0_4"/>
<dbReference type="OrthoDB" id="5293449at2"/>
<dbReference type="GO" id="GO:0005737">
    <property type="term" value="C:cytoplasm"/>
    <property type="evidence" value="ECO:0007669"/>
    <property type="project" value="UniProtKB-SubCell"/>
</dbReference>
<dbReference type="GO" id="GO:0009379">
    <property type="term" value="C:Holliday junction helicase complex"/>
    <property type="evidence" value="ECO:0007669"/>
    <property type="project" value="InterPro"/>
</dbReference>
<dbReference type="GO" id="GO:0048476">
    <property type="term" value="C:Holliday junction resolvase complex"/>
    <property type="evidence" value="ECO:0007669"/>
    <property type="project" value="UniProtKB-UniRule"/>
</dbReference>
<dbReference type="GO" id="GO:0005524">
    <property type="term" value="F:ATP binding"/>
    <property type="evidence" value="ECO:0007669"/>
    <property type="project" value="InterPro"/>
</dbReference>
<dbReference type="GO" id="GO:0000400">
    <property type="term" value="F:four-way junction DNA binding"/>
    <property type="evidence" value="ECO:0007669"/>
    <property type="project" value="UniProtKB-UniRule"/>
</dbReference>
<dbReference type="GO" id="GO:0009378">
    <property type="term" value="F:four-way junction helicase activity"/>
    <property type="evidence" value="ECO:0007669"/>
    <property type="project" value="InterPro"/>
</dbReference>
<dbReference type="GO" id="GO:0006310">
    <property type="term" value="P:DNA recombination"/>
    <property type="evidence" value="ECO:0007669"/>
    <property type="project" value="UniProtKB-UniRule"/>
</dbReference>
<dbReference type="GO" id="GO:0006281">
    <property type="term" value="P:DNA repair"/>
    <property type="evidence" value="ECO:0007669"/>
    <property type="project" value="UniProtKB-UniRule"/>
</dbReference>
<dbReference type="CDD" id="cd14332">
    <property type="entry name" value="UBA_RuvA_C"/>
    <property type="match status" value="1"/>
</dbReference>
<dbReference type="Gene3D" id="1.10.150.20">
    <property type="entry name" value="5' to 3' exonuclease, C-terminal subdomain"/>
    <property type="match status" value="1"/>
</dbReference>
<dbReference type="Gene3D" id="1.10.8.10">
    <property type="entry name" value="DNA helicase RuvA subunit, C-terminal domain"/>
    <property type="match status" value="1"/>
</dbReference>
<dbReference type="Gene3D" id="2.40.50.140">
    <property type="entry name" value="Nucleic acid-binding proteins"/>
    <property type="match status" value="1"/>
</dbReference>
<dbReference type="HAMAP" id="MF_00031">
    <property type="entry name" value="DNA_HJ_migration_RuvA"/>
    <property type="match status" value="1"/>
</dbReference>
<dbReference type="InterPro" id="IPR013849">
    <property type="entry name" value="DNA_helicase_Holl-junc_RuvA_I"/>
</dbReference>
<dbReference type="InterPro" id="IPR003583">
    <property type="entry name" value="Hlx-hairpin-Hlx_DNA-bd_motif"/>
</dbReference>
<dbReference type="InterPro" id="IPR012340">
    <property type="entry name" value="NA-bd_OB-fold"/>
</dbReference>
<dbReference type="InterPro" id="IPR000085">
    <property type="entry name" value="RuvA"/>
</dbReference>
<dbReference type="InterPro" id="IPR010994">
    <property type="entry name" value="RuvA_2-like"/>
</dbReference>
<dbReference type="InterPro" id="IPR011114">
    <property type="entry name" value="RuvA_C"/>
</dbReference>
<dbReference type="InterPro" id="IPR036267">
    <property type="entry name" value="RuvA_C_sf"/>
</dbReference>
<dbReference type="NCBIfam" id="TIGR00084">
    <property type="entry name" value="ruvA"/>
    <property type="match status" value="1"/>
</dbReference>
<dbReference type="Pfam" id="PF14520">
    <property type="entry name" value="HHH_5"/>
    <property type="match status" value="1"/>
</dbReference>
<dbReference type="Pfam" id="PF07499">
    <property type="entry name" value="RuvA_C"/>
    <property type="match status" value="1"/>
</dbReference>
<dbReference type="Pfam" id="PF01330">
    <property type="entry name" value="RuvA_N"/>
    <property type="match status" value="1"/>
</dbReference>
<dbReference type="SMART" id="SM00278">
    <property type="entry name" value="HhH1"/>
    <property type="match status" value="2"/>
</dbReference>
<dbReference type="SUPFAM" id="SSF46929">
    <property type="entry name" value="DNA helicase RuvA subunit, C-terminal domain"/>
    <property type="match status" value="1"/>
</dbReference>
<dbReference type="SUPFAM" id="SSF50249">
    <property type="entry name" value="Nucleic acid-binding proteins"/>
    <property type="match status" value="1"/>
</dbReference>
<dbReference type="SUPFAM" id="SSF47781">
    <property type="entry name" value="RuvA domain 2-like"/>
    <property type="match status" value="1"/>
</dbReference>
<feature type="chain" id="PRO_0000224860" description="Holliday junction branch migration complex subunit RuvA">
    <location>
        <begin position="1"/>
        <end position="192"/>
    </location>
</feature>
<feature type="region of interest" description="Domain I" evidence="1">
    <location>
        <begin position="1"/>
        <end position="64"/>
    </location>
</feature>
<feature type="region of interest" description="Domain II" evidence="1">
    <location>
        <begin position="65"/>
        <end position="143"/>
    </location>
</feature>
<feature type="region of interest" description="Flexible linker" evidence="1">
    <location>
        <begin position="144"/>
        <end position="149"/>
    </location>
</feature>
<feature type="region of interest" description="Domain III" evidence="1">
    <location>
        <begin position="149"/>
        <end position="192"/>
    </location>
</feature>
<proteinExistence type="inferred from homology"/>
<accession>Q478E3</accession>